<dbReference type="EMBL" id="CP001337">
    <property type="protein sequence ID" value="ACL25861.1"/>
    <property type="molecule type" value="Genomic_DNA"/>
</dbReference>
<dbReference type="RefSeq" id="WP_012258254.1">
    <property type="nucleotide sequence ID" value="NC_011831.1"/>
</dbReference>
<dbReference type="SMR" id="B8G6Q2"/>
<dbReference type="STRING" id="326427.Cagg_3001"/>
<dbReference type="KEGG" id="cag:Cagg_3001"/>
<dbReference type="eggNOG" id="COG0257">
    <property type="taxonomic scope" value="Bacteria"/>
</dbReference>
<dbReference type="HOGENOM" id="CLU_135723_6_2_0"/>
<dbReference type="OrthoDB" id="9802520at2"/>
<dbReference type="Proteomes" id="UP000002508">
    <property type="component" value="Chromosome"/>
</dbReference>
<dbReference type="GO" id="GO:0005737">
    <property type="term" value="C:cytoplasm"/>
    <property type="evidence" value="ECO:0007669"/>
    <property type="project" value="UniProtKB-ARBA"/>
</dbReference>
<dbReference type="GO" id="GO:1990904">
    <property type="term" value="C:ribonucleoprotein complex"/>
    <property type="evidence" value="ECO:0007669"/>
    <property type="project" value="UniProtKB-KW"/>
</dbReference>
<dbReference type="GO" id="GO:0005840">
    <property type="term" value="C:ribosome"/>
    <property type="evidence" value="ECO:0007669"/>
    <property type="project" value="UniProtKB-KW"/>
</dbReference>
<dbReference type="GO" id="GO:0003735">
    <property type="term" value="F:structural constituent of ribosome"/>
    <property type="evidence" value="ECO:0007669"/>
    <property type="project" value="InterPro"/>
</dbReference>
<dbReference type="GO" id="GO:0006412">
    <property type="term" value="P:translation"/>
    <property type="evidence" value="ECO:0007669"/>
    <property type="project" value="UniProtKB-UniRule"/>
</dbReference>
<dbReference type="HAMAP" id="MF_00251">
    <property type="entry name" value="Ribosomal_bL36"/>
    <property type="match status" value="1"/>
</dbReference>
<dbReference type="InterPro" id="IPR000473">
    <property type="entry name" value="Ribosomal_bL36"/>
</dbReference>
<dbReference type="InterPro" id="IPR035977">
    <property type="entry name" value="Ribosomal_bL36_sp"/>
</dbReference>
<dbReference type="NCBIfam" id="TIGR01022">
    <property type="entry name" value="rpmJ_bact"/>
    <property type="match status" value="1"/>
</dbReference>
<dbReference type="PANTHER" id="PTHR42888">
    <property type="entry name" value="50S RIBOSOMAL PROTEIN L36, CHLOROPLASTIC"/>
    <property type="match status" value="1"/>
</dbReference>
<dbReference type="PANTHER" id="PTHR42888:SF1">
    <property type="entry name" value="LARGE RIBOSOMAL SUBUNIT PROTEIN BL36C"/>
    <property type="match status" value="1"/>
</dbReference>
<dbReference type="Pfam" id="PF00444">
    <property type="entry name" value="Ribosomal_L36"/>
    <property type="match status" value="1"/>
</dbReference>
<dbReference type="SUPFAM" id="SSF57840">
    <property type="entry name" value="Ribosomal protein L36"/>
    <property type="match status" value="1"/>
</dbReference>
<dbReference type="PROSITE" id="PS00828">
    <property type="entry name" value="RIBOSOMAL_L36"/>
    <property type="match status" value="1"/>
</dbReference>
<comment type="similarity">
    <text evidence="1">Belongs to the bacterial ribosomal protein bL36 family.</text>
</comment>
<evidence type="ECO:0000255" key="1">
    <source>
        <dbReference type="HAMAP-Rule" id="MF_00251"/>
    </source>
</evidence>
<evidence type="ECO:0000305" key="2"/>
<protein>
    <recommendedName>
        <fullName evidence="1">Large ribosomal subunit protein bL36</fullName>
    </recommendedName>
    <alternativeName>
        <fullName evidence="2">50S ribosomal protein L36</fullName>
    </alternativeName>
</protein>
<reference key="1">
    <citation type="submission" date="2008-12" db="EMBL/GenBank/DDBJ databases">
        <title>Complete sequence of Chloroflexus aggregans DSM 9485.</title>
        <authorList>
            <consortium name="US DOE Joint Genome Institute"/>
            <person name="Lucas S."/>
            <person name="Copeland A."/>
            <person name="Lapidus A."/>
            <person name="Glavina del Rio T."/>
            <person name="Dalin E."/>
            <person name="Tice H."/>
            <person name="Pitluck S."/>
            <person name="Foster B."/>
            <person name="Larimer F."/>
            <person name="Land M."/>
            <person name="Hauser L."/>
            <person name="Kyrpides N."/>
            <person name="Mikhailova N."/>
            <person name="Bryant D.A."/>
            <person name="Richardson P."/>
        </authorList>
    </citation>
    <scope>NUCLEOTIDE SEQUENCE [LARGE SCALE GENOMIC DNA]</scope>
    <source>
        <strain>MD-66 / DSM 9485</strain>
    </source>
</reference>
<organism>
    <name type="scientific">Chloroflexus aggregans (strain MD-66 / DSM 9485)</name>
    <dbReference type="NCBI Taxonomy" id="326427"/>
    <lineage>
        <taxon>Bacteria</taxon>
        <taxon>Bacillati</taxon>
        <taxon>Chloroflexota</taxon>
        <taxon>Chloroflexia</taxon>
        <taxon>Chloroflexales</taxon>
        <taxon>Chloroflexineae</taxon>
        <taxon>Chloroflexaceae</taxon>
        <taxon>Chloroflexus</taxon>
    </lineage>
</organism>
<gene>
    <name evidence="1" type="primary">rpmJ</name>
    <name type="ordered locus">Cagg_3001</name>
</gene>
<sequence>MKVRASVKPRCEYCKVIKRKGVIRVICSRTPKHKQRQG</sequence>
<accession>B8G6Q2</accession>
<keyword id="KW-0687">Ribonucleoprotein</keyword>
<keyword id="KW-0689">Ribosomal protein</keyword>
<name>RL36_CHLAD</name>
<feature type="chain" id="PRO_1000196176" description="Large ribosomal subunit protein bL36">
    <location>
        <begin position="1"/>
        <end position="38"/>
    </location>
</feature>
<proteinExistence type="inferred from homology"/>